<organism>
    <name type="scientific">Jasminum nudiflorum</name>
    <name type="common">Winter jasmine</name>
    <dbReference type="NCBI Taxonomy" id="126431"/>
    <lineage>
        <taxon>Eukaryota</taxon>
        <taxon>Viridiplantae</taxon>
        <taxon>Streptophyta</taxon>
        <taxon>Embryophyta</taxon>
        <taxon>Tracheophyta</taxon>
        <taxon>Spermatophyta</taxon>
        <taxon>Magnoliopsida</taxon>
        <taxon>eudicotyledons</taxon>
        <taxon>Gunneridae</taxon>
        <taxon>Pentapetalae</taxon>
        <taxon>asterids</taxon>
        <taxon>lamiids</taxon>
        <taxon>Lamiales</taxon>
        <taxon>Oleaceae</taxon>
        <taxon>Jasmineae</taxon>
        <taxon>Jasminum</taxon>
    </lineage>
</organism>
<dbReference type="EMBL" id="DQ673255">
    <property type="protein sequence ID" value="ABG74631.1"/>
    <property type="molecule type" value="Genomic_DNA"/>
</dbReference>
<dbReference type="RefSeq" id="YP_778493.1">
    <property type="nucleotide sequence ID" value="NC_008407.1"/>
</dbReference>
<dbReference type="SMR" id="Q06RC8"/>
<dbReference type="GeneID" id="4319826"/>
<dbReference type="GO" id="GO:0009535">
    <property type="term" value="C:chloroplast thylakoid membrane"/>
    <property type="evidence" value="ECO:0007669"/>
    <property type="project" value="UniProtKB-SubCell"/>
</dbReference>
<dbReference type="GO" id="GO:0015979">
    <property type="term" value="P:photosynthesis"/>
    <property type="evidence" value="ECO:0007669"/>
    <property type="project" value="UniProtKB-UniRule"/>
</dbReference>
<dbReference type="FunFam" id="1.25.40.10:FF:000004">
    <property type="entry name" value="Photosystem I assembly protein Ycf3"/>
    <property type="match status" value="1"/>
</dbReference>
<dbReference type="Gene3D" id="1.25.40.10">
    <property type="entry name" value="Tetratricopeptide repeat domain"/>
    <property type="match status" value="1"/>
</dbReference>
<dbReference type="HAMAP" id="MF_00439">
    <property type="entry name" value="Ycf3"/>
    <property type="match status" value="1"/>
</dbReference>
<dbReference type="InterPro" id="IPR022818">
    <property type="entry name" value="PSI_Ycf3_assembly"/>
</dbReference>
<dbReference type="InterPro" id="IPR011990">
    <property type="entry name" value="TPR-like_helical_dom_sf"/>
</dbReference>
<dbReference type="InterPro" id="IPR019734">
    <property type="entry name" value="TPR_rpt"/>
</dbReference>
<dbReference type="InterPro" id="IPR051685">
    <property type="entry name" value="Ycf3/AcsC/BcsC/TPR_MFPF"/>
</dbReference>
<dbReference type="NCBIfam" id="NF002725">
    <property type="entry name" value="PRK02603.1"/>
    <property type="match status" value="1"/>
</dbReference>
<dbReference type="PANTHER" id="PTHR44943">
    <property type="entry name" value="CELLULOSE SYNTHASE OPERON PROTEIN C"/>
    <property type="match status" value="1"/>
</dbReference>
<dbReference type="PANTHER" id="PTHR44943:SF8">
    <property type="entry name" value="TPR REPEAT-CONTAINING PROTEIN MJ0263"/>
    <property type="match status" value="1"/>
</dbReference>
<dbReference type="Pfam" id="PF00515">
    <property type="entry name" value="TPR_1"/>
    <property type="match status" value="1"/>
</dbReference>
<dbReference type="SMART" id="SM00028">
    <property type="entry name" value="TPR"/>
    <property type="match status" value="3"/>
</dbReference>
<dbReference type="SUPFAM" id="SSF48452">
    <property type="entry name" value="TPR-like"/>
    <property type="match status" value="1"/>
</dbReference>
<dbReference type="PROSITE" id="PS50005">
    <property type="entry name" value="TPR"/>
    <property type="match status" value="3"/>
</dbReference>
<dbReference type="PROSITE" id="PS50293">
    <property type="entry name" value="TPR_REGION"/>
    <property type="match status" value="2"/>
</dbReference>
<evidence type="ECO:0000255" key="1">
    <source>
        <dbReference type="HAMAP-Rule" id="MF_00439"/>
    </source>
</evidence>
<keyword id="KW-0150">Chloroplast</keyword>
<keyword id="KW-0472">Membrane</keyword>
<keyword id="KW-0602">Photosynthesis</keyword>
<keyword id="KW-0934">Plastid</keyword>
<keyword id="KW-0677">Repeat</keyword>
<keyword id="KW-0793">Thylakoid</keyword>
<keyword id="KW-0802">TPR repeat</keyword>
<geneLocation type="chloroplast"/>
<proteinExistence type="inferred from homology"/>
<feature type="chain" id="PRO_0000275622" description="Photosystem I assembly protein Ycf3">
    <location>
        <begin position="1"/>
        <end position="168"/>
    </location>
</feature>
<feature type="repeat" description="TPR 1">
    <location>
        <begin position="35"/>
        <end position="68"/>
    </location>
</feature>
<feature type="repeat" description="TPR 2">
    <location>
        <begin position="72"/>
        <end position="105"/>
    </location>
</feature>
<feature type="repeat" description="TPR 3">
    <location>
        <begin position="120"/>
        <end position="153"/>
    </location>
</feature>
<sequence>MPRSRINGNFIDKTFSIVANILLRIIPTTSGEKEAFTYYRDGISAQSEGNYAEALQNYYEAMRLEIDPYDRSYILYNIGLIHTSNGEHTKALEYYFRALERNSFLPQAFNNMAVICHYRGEQAIRQGDSEIAEAWFDQAAEYWKQAIALTPGNYIEAHNWLKITRRFE</sequence>
<protein>
    <recommendedName>
        <fullName evidence="1">Photosystem I assembly protein Ycf3</fullName>
    </recommendedName>
</protein>
<gene>
    <name evidence="1" type="primary">ycf3</name>
    <name type="ORF">JNC0481</name>
</gene>
<comment type="function">
    <text evidence="1">Essential for the assembly of the photosystem I (PSI) complex. May act as a chaperone-like factor to guide the assembly of the PSI subunits.</text>
</comment>
<comment type="subcellular location">
    <subcellularLocation>
        <location evidence="1">Plastid</location>
        <location evidence="1">Chloroplast thylakoid membrane</location>
        <topology evidence="1">Peripheral membrane protein</topology>
    </subcellularLocation>
</comment>
<comment type="similarity">
    <text evidence="1">Belongs to the Ycf3 family.</text>
</comment>
<reference key="1">
    <citation type="journal article" date="2007" name="Mol. Biol. Evol.">
        <title>Gene relocations within chloroplast genomes of Jasminum and Menodora (Oleaceae) are due to multiple, overlapping inversions.</title>
        <authorList>
            <person name="Lee H.-L."/>
            <person name="Jansen R.K."/>
            <person name="Chumley T.W."/>
            <person name="Kim K.-J."/>
        </authorList>
    </citation>
    <scope>NUCLEOTIDE SEQUENCE [LARGE SCALE GENOMIC DNA]</scope>
</reference>
<name>YCF3_JASNU</name>
<accession>Q06RC8</accession>